<comment type="subcellular location">
    <subcellularLocation>
        <location evidence="2">Cell membrane</location>
        <topology evidence="2">Multi-pass membrane protein</topology>
    </subcellularLocation>
</comment>
<comment type="similarity">
    <text evidence="2">Belongs to the EamA transporter family.</text>
</comment>
<keyword id="KW-1003">Cell membrane</keyword>
<keyword id="KW-0472">Membrane</keyword>
<keyword id="KW-1185">Reference proteome</keyword>
<keyword id="KW-0677">Repeat</keyword>
<keyword id="KW-0812">Transmembrane</keyword>
<keyword id="KW-1133">Transmembrane helix</keyword>
<keyword id="KW-0813">Transport</keyword>
<organism>
    <name type="scientific">Bacillus subtilis (strain 168)</name>
    <dbReference type="NCBI Taxonomy" id="224308"/>
    <lineage>
        <taxon>Bacteria</taxon>
        <taxon>Bacillati</taxon>
        <taxon>Bacillota</taxon>
        <taxon>Bacilli</taxon>
        <taxon>Bacillales</taxon>
        <taxon>Bacillaceae</taxon>
        <taxon>Bacillus</taxon>
    </lineage>
</organism>
<evidence type="ECO:0000255" key="1"/>
<evidence type="ECO:0000305" key="2"/>
<sequence length="312" mass="34089">MVKHQQTPAYIAAILYSFIIGLSFLFVKIALQTAEPFDILAHRFTIAFAAATVPILFGWVKLSIRVKDVIDILPLALLYPALFFSFQAFGLVYSSSSEAGIIQAAIPIFTMVFAAYVLKERPTWTQKGFTVLSVAGVMFIFVMKGVDVESASLKGSLLILLSALSSAMYNTAARKMTQRFKLTELTYIMSAIGFVVFNAIALVRHGAAGTVGTYFLPFREPGFVLAIVYLGVLSSLVTSFLSNYTLSRIEAFKMSAFNHVSTIVTMIAGFVILNESLAWYHLAGAVCIMIGVVGSNINLEKKTKRPGMPAKK</sequence>
<reference key="1">
    <citation type="journal article" date="1993" name="Mol. Microbiol.">
        <title>Sequence and analysis of the genetic locus responsible for surfactin synthesis in Bacillus subtilis.</title>
        <authorList>
            <person name="Cosmina P."/>
            <person name="Rodriguez F."/>
            <person name="de Ferra F."/>
            <person name="Grandi G."/>
            <person name="Perego M."/>
            <person name="Venema G."/>
            <person name="van Sinderen D."/>
        </authorList>
    </citation>
    <scope>NUCLEOTIDE SEQUENCE [GENOMIC DNA]</scope>
    <source>
        <strain>168 / JH642</strain>
    </source>
</reference>
<reference key="2">
    <citation type="journal article" date="1996" name="Microbiology">
        <title>The 25 degrees-36 degrees region of the Bacillus subtilis chromosome: determination of the sequence of a 146 kb segment and identification of 113 genes.</title>
        <authorList>
            <person name="Yamane K."/>
            <person name="Kumano M."/>
            <person name="Kurita K."/>
        </authorList>
    </citation>
    <scope>NUCLEOTIDE SEQUENCE [GENOMIC DNA]</scope>
    <source>
        <strain>168</strain>
    </source>
</reference>
<reference key="3">
    <citation type="journal article" date="1997" name="Nature">
        <title>The complete genome sequence of the Gram-positive bacterium Bacillus subtilis.</title>
        <authorList>
            <person name="Kunst F."/>
            <person name="Ogasawara N."/>
            <person name="Moszer I."/>
            <person name="Albertini A.M."/>
            <person name="Alloni G."/>
            <person name="Azevedo V."/>
            <person name="Bertero M.G."/>
            <person name="Bessieres P."/>
            <person name="Bolotin A."/>
            <person name="Borchert S."/>
            <person name="Borriss R."/>
            <person name="Boursier L."/>
            <person name="Brans A."/>
            <person name="Braun M."/>
            <person name="Brignell S.C."/>
            <person name="Bron S."/>
            <person name="Brouillet S."/>
            <person name="Bruschi C.V."/>
            <person name="Caldwell B."/>
            <person name="Capuano V."/>
            <person name="Carter N.M."/>
            <person name="Choi S.-K."/>
            <person name="Codani J.-J."/>
            <person name="Connerton I.F."/>
            <person name="Cummings N.J."/>
            <person name="Daniel R.A."/>
            <person name="Denizot F."/>
            <person name="Devine K.M."/>
            <person name="Duesterhoeft A."/>
            <person name="Ehrlich S.D."/>
            <person name="Emmerson P.T."/>
            <person name="Entian K.-D."/>
            <person name="Errington J."/>
            <person name="Fabret C."/>
            <person name="Ferrari E."/>
            <person name="Foulger D."/>
            <person name="Fritz C."/>
            <person name="Fujita M."/>
            <person name="Fujita Y."/>
            <person name="Fuma S."/>
            <person name="Galizzi A."/>
            <person name="Galleron N."/>
            <person name="Ghim S.-Y."/>
            <person name="Glaser P."/>
            <person name="Goffeau A."/>
            <person name="Golightly E.J."/>
            <person name="Grandi G."/>
            <person name="Guiseppi G."/>
            <person name="Guy B.J."/>
            <person name="Haga K."/>
            <person name="Haiech J."/>
            <person name="Harwood C.R."/>
            <person name="Henaut A."/>
            <person name="Hilbert H."/>
            <person name="Holsappel S."/>
            <person name="Hosono S."/>
            <person name="Hullo M.-F."/>
            <person name="Itaya M."/>
            <person name="Jones L.-M."/>
            <person name="Joris B."/>
            <person name="Karamata D."/>
            <person name="Kasahara Y."/>
            <person name="Klaerr-Blanchard M."/>
            <person name="Klein C."/>
            <person name="Kobayashi Y."/>
            <person name="Koetter P."/>
            <person name="Koningstein G."/>
            <person name="Krogh S."/>
            <person name="Kumano M."/>
            <person name="Kurita K."/>
            <person name="Lapidus A."/>
            <person name="Lardinois S."/>
            <person name="Lauber J."/>
            <person name="Lazarevic V."/>
            <person name="Lee S.-M."/>
            <person name="Levine A."/>
            <person name="Liu H."/>
            <person name="Masuda S."/>
            <person name="Mauel C."/>
            <person name="Medigue C."/>
            <person name="Medina N."/>
            <person name="Mellado R.P."/>
            <person name="Mizuno M."/>
            <person name="Moestl D."/>
            <person name="Nakai S."/>
            <person name="Noback M."/>
            <person name="Noone D."/>
            <person name="O'Reilly M."/>
            <person name="Ogawa K."/>
            <person name="Ogiwara A."/>
            <person name="Oudega B."/>
            <person name="Park S.-H."/>
            <person name="Parro V."/>
            <person name="Pohl T.M."/>
            <person name="Portetelle D."/>
            <person name="Porwollik S."/>
            <person name="Prescott A.M."/>
            <person name="Presecan E."/>
            <person name="Pujic P."/>
            <person name="Purnelle B."/>
            <person name="Rapoport G."/>
            <person name="Rey M."/>
            <person name="Reynolds S."/>
            <person name="Rieger M."/>
            <person name="Rivolta C."/>
            <person name="Rocha E."/>
            <person name="Roche B."/>
            <person name="Rose M."/>
            <person name="Sadaie Y."/>
            <person name="Sato T."/>
            <person name="Scanlan E."/>
            <person name="Schleich S."/>
            <person name="Schroeter R."/>
            <person name="Scoffone F."/>
            <person name="Sekiguchi J."/>
            <person name="Sekowska A."/>
            <person name="Seror S.J."/>
            <person name="Serror P."/>
            <person name="Shin B.-S."/>
            <person name="Soldo B."/>
            <person name="Sorokin A."/>
            <person name="Tacconi E."/>
            <person name="Takagi T."/>
            <person name="Takahashi H."/>
            <person name="Takemaru K."/>
            <person name="Takeuchi M."/>
            <person name="Tamakoshi A."/>
            <person name="Tanaka T."/>
            <person name="Terpstra P."/>
            <person name="Tognoni A."/>
            <person name="Tosato V."/>
            <person name="Uchiyama S."/>
            <person name="Vandenbol M."/>
            <person name="Vannier F."/>
            <person name="Vassarotti A."/>
            <person name="Viari A."/>
            <person name="Wambutt R."/>
            <person name="Wedler E."/>
            <person name="Wedler H."/>
            <person name="Weitzenegger T."/>
            <person name="Winters P."/>
            <person name="Wipat A."/>
            <person name="Yamamoto H."/>
            <person name="Yamane K."/>
            <person name="Yasumoto K."/>
            <person name="Yata K."/>
            <person name="Yoshida K."/>
            <person name="Yoshikawa H.-F."/>
            <person name="Zumstein E."/>
            <person name="Yoshikawa H."/>
            <person name="Danchin A."/>
        </authorList>
    </citation>
    <scope>NUCLEOTIDE SEQUENCE [LARGE SCALE GENOMIC DNA]</scope>
    <source>
        <strain>168</strain>
    </source>
</reference>
<reference key="4">
    <citation type="journal article" date="2009" name="Microbiology">
        <title>From a consortium sequence to a unified sequence: the Bacillus subtilis 168 reference genome a decade later.</title>
        <authorList>
            <person name="Barbe V."/>
            <person name="Cruveiller S."/>
            <person name="Kunst F."/>
            <person name="Lenoble P."/>
            <person name="Meurice G."/>
            <person name="Sekowska A."/>
            <person name="Vallenet D."/>
            <person name="Wang T."/>
            <person name="Moszer I."/>
            <person name="Medigue C."/>
            <person name="Danchin A."/>
        </authorList>
    </citation>
    <scope>SEQUENCE REVISION TO 65</scope>
</reference>
<protein>
    <recommendedName>
        <fullName>Uncharacterized transporter YcxC</fullName>
    </recommendedName>
</protein>
<dbReference type="EMBL" id="X70356">
    <property type="protein sequence ID" value="CAA49823.1"/>
    <property type="molecule type" value="Genomic_DNA"/>
</dbReference>
<dbReference type="EMBL" id="D50453">
    <property type="protein sequence ID" value="BAA08989.1"/>
    <property type="molecule type" value="Genomic_DNA"/>
</dbReference>
<dbReference type="EMBL" id="AL009126">
    <property type="protein sequence ID" value="CAB12149.2"/>
    <property type="molecule type" value="Genomic_DNA"/>
</dbReference>
<dbReference type="PIR" id="I40491">
    <property type="entry name" value="I40491"/>
</dbReference>
<dbReference type="RefSeq" id="NP_388237.2">
    <property type="nucleotide sequence ID" value="NC_000964.3"/>
</dbReference>
<dbReference type="RefSeq" id="WP_003246664.1">
    <property type="nucleotide sequence ID" value="NZ_OZ025638.1"/>
</dbReference>
<dbReference type="SMR" id="Q08794"/>
<dbReference type="FunCoup" id="Q08794">
    <property type="interactions" value="96"/>
</dbReference>
<dbReference type="IntAct" id="Q08794">
    <property type="interactions" value="2"/>
</dbReference>
<dbReference type="STRING" id="224308.BSU03550"/>
<dbReference type="PaxDb" id="224308-BSU03550"/>
<dbReference type="EnsemblBacteria" id="CAB12149">
    <property type="protein sequence ID" value="CAB12149"/>
    <property type="gene ID" value="BSU_03550"/>
</dbReference>
<dbReference type="GeneID" id="938297"/>
<dbReference type="KEGG" id="bsu:BSU03550"/>
<dbReference type="PATRIC" id="fig|224308.179.peg.372"/>
<dbReference type="eggNOG" id="COG0697">
    <property type="taxonomic scope" value="Bacteria"/>
</dbReference>
<dbReference type="InParanoid" id="Q08794"/>
<dbReference type="OrthoDB" id="1682095at2"/>
<dbReference type="PhylomeDB" id="Q08794"/>
<dbReference type="BioCyc" id="BSUB:BSU03550-MONOMER"/>
<dbReference type="Proteomes" id="UP000001570">
    <property type="component" value="Chromosome"/>
</dbReference>
<dbReference type="GO" id="GO:0005886">
    <property type="term" value="C:plasma membrane"/>
    <property type="evidence" value="ECO:0007669"/>
    <property type="project" value="UniProtKB-SubCell"/>
</dbReference>
<dbReference type="Gene3D" id="1.10.3730.20">
    <property type="match status" value="1"/>
</dbReference>
<dbReference type="InterPro" id="IPR050638">
    <property type="entry name" value="AA-Vitamin_Transporters"/>
</dbReference>
<dbReference type="InterPro" id="IPR000620">
    <property type="entry name" value="EamA_dom"/>
</dbReference>
<dbReference type="PANTHER" id="PTHR32322">
    <property type="entry name" value="INNER MEMBRANE TRANSPORTER"/>
    <property type="match status" value="1"/>
</dbReference>
<dbReference type="PANTHER" id="PTHR32322:SF18">
    <property type="entry name" value="S-ADENOSYLMETHIONINE_S-ADENOSYLHOMOCYSTEINE TRANSPORTER"/>
    <property type="match status" value="1"/>
</dbReference>
<dbReference type="Pfam" id="PF00892">
    <property type="entry name" value="EamA"/>
    <property type="match status" value="2"/>
</dbReference>
<dbReference type="SUPFAM" id="SSF103481">
    <property type="entry name" value="Multidrug resistance efflux transporter EmrE"/>
    <property type="match status" value="2"/>
</dbReference>
<accession>Q08794</accession>
<proteinExistence type="inferred from homology"/>
<gene>
    <name type="primary">ycxC</name>
    <name type="ordered locus">BSU03550</name>
</gene>
<name>YCXC_BACSU</name>
<feature type="chain" id="PRO_0000108179" description="Uncharacterized transporter YcxC">
    <location>
        <begin position="1"/>
        <end position="312"/>
    </location>
</feature>
<feature type="transmembrane region" description="Helical" evidence="1">
    <location>
        <begin position="11"/>
        <end position="31"/>
    </location>
</feature>
<feature type="transmembrane region" description="Helical" evidence="1">
    <location>
        <begin position="46"/>
        <end position="66"/>
    </location>
</feature>
<feature type="transmembrane region" description="Helical" evidence="1">
    <location>
        <begin position="72"/>
        <end position="92"/>
    </location>
</feature>
<feature type="transmembrane region" description="Helical" evidence="1">
    <location>
        <begin position="98"/>
        <end position="118"/>
    </location>
</feature>
<feature type="transmembrane region" description="Helical" evidence="1">
    <location>
        <begin position="128"/>
        <end position="148"/>
    </location>
</feature>
<feature type="transmembrane region" description="Helical" evidence="1">
    <location>
        <begin position="155"/>
        <end position="171"/>
    </location>
</feature>
<feature type="transmembrane region" description="Helical" evidence="1">
    <location>
        <begin position="183"/>
        <end position="203"/>
    </location>
</feature>
<feature type="transmembrane region" description="Helical" evidence="1">
    <location>
        <begin position="221"/>
        <end position="241"/>
    </location>
</feature>
<feature type="transmembrane region" description="Helical" evidence="1">
    <location>
        <begin position="254"/>
        <end position="274"/>
    </location>
</feature>
<feature type="transmembrane region" description="Helical" evidence="1">
    <location>
        <begin position="277"/>
        <end position="297"/>
    </location>
</feature>
<feature type="domain" description="EamA 1">
    <location>
        <begin position="18"/>
        <end position="142"/>
    </location>
</feature>
<feature type="domain" description="EamA 2">
    <location>
        <begin position="164"/>
        <end position="297"/>
    </location>
</feature>
<feature type="sequence conflict" description="In Ref. 1; CAA49823 and 2; BAA08989." evidence="2" ref="1 2">
    <original>R</original>
    <variation>L</variation>
    <location>
        <position position="65"/>
    </location>
</feature>